<dbReference type="EC" id="2.7.7.23" evidence="1"/>
<dbReference type="EC" id="2.3.1.157" evidence="1"/>
<dbReference type="EMBL" id="CP000422">
    <property type="protein sequence ID" value="ABJ67390.1"/>
    <property type="molecule type" value="Genomic_DNA"/>
</dbReference>
<dbReference type="RefSeq" id="WP_011672986.1">
    <property type="nucleotide sequence ID" value="NC_008525.1"/>
</dbReference>
<dbReference type="SMR" id="Q03HD2"/>
<dbReference type="STRING" id="278197.PEPE_0293"/>
<dbReference type="GeneID" id="33062203"/>
<dbReference type="KEGG" id="ppe:PEPE_0293"/>
<dbReference type="eggNOG" id="COG1207">
    <property type="taxonomic scope" value="Bacteria"/>
</dbReference>
<dbReference type="HOGENOM" id="CLU_029499_15_2_9"/>
<dbReference type="OrthoDB" id="9775031at2"/>
<dbReference type="UniPathway" id="UPA00113">
    <property type="reaction ID" value="UER00532"/>
</dbReference>
<dbReference type="UniPathway" id="UPA00113">
    <property type="reaction ID" value="UER00533"/>
</dbReference>
<dbReference type="UniPathway" id="UPA00973"/>
<dbReference type="Proteomes" id="UP000000773">
    <property type="component" value="Chromosome"/>
</dbReference>
<dbReference type="GO" id="GO:0005737">
    <property type="term" value="C:cytoplasm"/>
    <property type="evidence" value="ECO:0007669"/>
    <property type="project" value="UniProtKB-SubCell"/>
</dbReference>
<dbReference type="GO" id="GO:0016020">
    <property type="term" value="C:membrane"/>
    <property type="evidence" value="ECO:0007669"/>
    <property type="project" value="GOC"/>
</dbReference>
<dbReference type="GO" id="GO:0019134">
    <property type="term" value="F:glucosamine-1-phosphate N-acetyltransferase activity"/>
    <property type="evidence" value="ECO:0007669"/>
    <property type="project" value="UniProtKB-UniRule"/>
</dbReference>
<dbReference type="GO" id="GO:0000287">
    <property type="term" value="F:magnesium ion binding"/>
    <property type="evidence" value="ECO:0007669"/>
    <property type="project" value="UniProtKB-UniRule"/>
</dbReference>
<dbReference type="GO" id="GO:0003977">
    <property type="term" value="F:UDP-N-acetylglucosamine diphosphorylase activity"/>
    <property type="evidence" value="ECO:0007669"/>
    <property type="project" value="UniProtKB-UniRule"/>
</dbReference>
<dbReference type="GO" id="GO:0000902">
    <property type="term" value="P:cell morphogenesis"/>
    <property type="evidence" value="ECO:0007669"/>
    <property type="project" value="UniProtKB-UniRule"/>
</dbReference>
<dbReference type="GO" id="GO:0071555">
    <property type="term" value="P:cell wall organization"/>
    <property type="evidence" value="ECO:0007669"/>
    <property type="project" value="UniProtKB-KW"/>
</dbReference>
<dbReference type="GO" id="GO:0009245">
    <property type="term" value="P:lipid A biosynthetic process"/>
    <property type="evidence" value="ECO:0007669"/>
    <property type="project" value="UniProtKB-UniRule"/>
</dbReference>
<dbReference type="GO" id="GO:0009252">
    <property type="term" value="P:peptidoglycan biosynthetic process"/>
    <property type="evidence" value="ECO:0007669"/>
    <property type="project" value="UniProtKB-UniRule"/>
</dbReference>
<dbReference type="GO" id="GO:0008360">
    <property type="term" value="P:regulation of cell shape"/>
    <property type="evidence" value="ECO:0007669"/>
    <property type="project" value="UniProtKB-KW"/>
</dbReference>
<dbReference type="GO" id="GO:0006048">
    <property type="term" value="P:UDP-N-acetylglucosamine biosynthetic process"/>
    <property type="evidence" value="ECO:0007669"/>
    <property type="project" value="UniProtKB-UniPathway"/>
</dbReference>
<dbReference type="CDD" id="cd02540">
    <property type="entry name" value="GT2_GlmU_N_bac"/>
    <property type="match status" value="1"/>
</dbReference>
<dbReference type="CDD" id="cd03353">
    <property type="entry name" value="LbH_GlmU_C"/>
    <property type="match status" value="1"/>
</dbReference>
<dbReference type="Gene3D" id="2.160.10.10">
    <property type="entry name" value="Hexapeptide repeat proteins"/>
    <property type="match status" value="1"/>
</dbReference>
<dbReference type="Gene3D" id="3.90.550.10">
    <property type="entry name" value="Spore Coat Polysaccharide Biosynthesis Protein SpsA, Chain A"/>
    <property type="match status" value="1"/>
</dbReference>
<dbReference type="HAMAP" id="MF_01631">
    <property type="entry name" value="GlmU"/>
    <property type="match status" value="1"/>
</dbReference>
<dbReference type="InterPro" id="IPR005882">
    <property type="entry name" value="Bifunctional_GlmU"/>
</dbReference>
<dbReference type="InterPro" id="IPR050065">
    <property type="entry name" value="GlmU-like"/>
</dbReference>
<dbReference type="InterPro" id="IPR038009">
    <property type="entry name" value="GlmU_C_LbH"/>
</dbReference>
<dbReference type="InterPro" id="IPR001451">
    <property type="entry name" value="Hexapep"/>
</dbReference>
<dbReference type="InterPro" id="IPR018357">
    <property type="entry name" value="Hexapep_transf_CS"/>
</dbReference>
<dbReference type="InterPro" id="IPR005835">
    <property type="entry name" value="NTP_transferase_dom"/>
</dbReference>
<dbReference type="InterPro" id="IPR029044">
    <property type="entry name" value="Nucleotide-diphossugar_trans"/>
</dbReference>
<dbReference type="InterPro" id="IPR011004">
    <property type="entry name" value="Trimer_LpxA-like_sf"/>
</dbReference>
<dbReference type="NCBIfam" id="TIGR01173">
    <property type="entry name" value="glmU"/>
    <property type="match status" value="1"/>
</dbReference>
<dbReference type="NCBIfam" id="NF010934">
    <property type="entry name" value="PRK14354.1"/>
    <property type="match status" value="1"/>
</dbReference>
<dbReference type="PANTHER" id="PTHR43584:SF3">
    <property type="entry name" value="BIFUNCTIONAL PROTEIN GLMU"/>
    <property type="match status" value="1"/>
</dbReference>
<dbReference type="PANTHER" id="PTHR43584">
    <property type="entry name" value="NUCLEOTIDYL TRANSFERASE"/>
    <property type="match status" value="1"/>
</dbReference>
<dbReference type="Pfam" id="PF00132">
    <property type="entry name" value="Hexapep"/>
    <property type="match status" value="2"/>
</dbReference>
<dbReference type="Pfam" id="PF00483">
    <property type="entry name" value="NTP_transferase"/>
    <property type="match status" value="1"/>
</dbReference>
<dbReference type="SUPFAM" id="SSF53448">
    <property type="entry name" value="Nucleotide-diphospho-sugar transferases"/>
    <property type="match status" value="1"/>
</dbReference>
<dbReference type="SUPFAM" id="SSF51161">
    <property type="entry name" value="Trimeric LpxA-like enzymes"/>
    <property type="match status" value="1"/>
</dbReference>
<dbReference type="PROSITE" id="PS00101">
    <property type="entry name" value="HEXAPEP_TRANSFERASES"/>
    <property type="match status" value="1"/>
</dbReference>
<sequence length="467" mass="51017">MEKNTIILAAGQGTRMKSKLYKVLHQVCGKAMVDHMLTQVEKTNMDHIVTIVGHGAEKVRELLGDRTEYAIQEQQLGTGHAVLQAEKILGDKDGMTMIVSGDTPLFTAKTFENLFEYHRQKGAAATILTARTENPFSYGRIVRNEVGVVSKIVEQKDATTEEAEIKEINTGVYCFDNQKLFAALHQVKNDNAQGEYYLPDVIGIMKDAGEIVAAYEMADFSESMGVNDRLALSKATKVMQRRINEEHMVNGVTIIDPENTYIDYGVEIGPDTIIEPGVQIQGNTKIGSSSVIGAHSKIVDSTIGNRVTVTSSQIESAIMHDDSNIGPHSHLRPQAEIGEFAHVGNYCEVKNAKLGARTKMGHLSYVGDADLGTDINIGCGVVFVNYDGMNKHHSTVGDYAFIGSNSNIVAPVTIADHSYVAAGSTITNDVNKFEMGIARGRQVNKEGYFKKLPVYDAALKAEEENNK</sequence>
<comment type="function">
    <text evidence="1">Catalyzes the last two sequential reactions in the de novo biosynthetic pathway for UDP-N-acetylglucosamine (UDP-GlcNAc). The C-terminal domain catalyzes the transfer of acetyl group from acetyl coenzyme A to glucosamine-1-phosphate (GlcN-1-P) to produce N-acetylglucosamine-1-phosphate (GlcNAc-1-P), which is converted into UDP-GlcNAc by the transfer of uridine 5-monophosphate (from uridine 5-triphosphate), a reaction catalyzed by the N-terminal domain.</text>
</comment>
<comment type="catalytic activity">
    <reaction evidence="1">
        <text>alpha-D-glucosamine 1-phosphate + acetyl-CoA = N-acetyl-alpha-D-glucosamine 1-phosphate + CoA + H(+)</text>
        <dbReference type="Rhea" id="RHEA:13725"/>
        <dbReference type="ChEBI" id="CHEBI:15378"/>
        <dbReference type="ChEBI" id="CHEBI:57287"/>
        <dbReference type="ChEBI" id="CHEBI:57288"/>
        <dbReference type="ChEBI" id="CHEBI:57776"/>
        <dbReference type="ChEBI" id="CHEBI:58516"/>
        <dbReference type="EC" id="2.3.1.157"/>
    </reaction>
</comment>
<comment type="catalytic activity">
    <reaction evidence="1">
        <text>N-acetyl-alpha-D-glucosamine 1-phosphate + UTP + H(+) = UDP-N-acetyl-alpha-D-glucosamine + diphosphate</text>
        <dbReference type="Rhea" id="RHEA:13509"/>
        <dbReference type="ChEBI" id="CHEBI:15378"/>
        <dbReference type="ChEBI" id="CHEBI:33019"/>
        <dbReference type="ChEBI" id="CHEBI:46398"/>
        <dbReference type="ChEBI" id="CHEBI:57705"/>
        <dbReference type="ChEBI" id="CHEBI:57776"/>
        <dbReference type="EC" id="2.7.7.23"/>
    </reaction>
</comment>
<comment type="cofactor">
    <cofactor evidence="1">
        <name>Mg(2+)</name>
        <dbReference type="ChEBI" id="CHEBI:18420"/>
    </cofactor>
    <text evidence="1">Binds 1 Mg(2+) ion per subunit.</text>
</comment>
<comment type="pathway">
    <text evidence="1">Nucleotide-sugar biosynthesis; UDP-N-acetyl-alpha-D-glucosamine biosynthesis; N-acetyl-alpha-D-glucosamine 1-phosphate from alpha-D-glucosamine 6-phosphate (route II): step 2/2.</text>
</comment>
<comment type="pathway">
    <text evidence="1">Nucleotide-sugar biosynthesis; UDP-N-acetyl-alpha-D-glucosamine biosynthesis; UDP-N-acetyl-alpha-D-glucosamine from N-acetyl-alpha-D-glucosamine 1-phosphate: step 1/1.</text>
</comment>
<comment type="pathway">
    <text evidence="1">Bacterial outer membrane biogenesis; LPS lipid A biosynthesis.</text>
</comment>
<comment type="subunit">
    <text evidence="1">Homotrimer.</text>
</comment>
<comment type="subcellular location">
    <subcellularLocation>
        <location evidence="1">Cytoplasm</location>
    </subcellularLocation>
</comment>
<comment type="similarity">
    <text evidence="1">In the N-terminal section; belongs to the N-acetylglucosamine-1-phosphate uridyltransferase family.</text>
</comment>
<comment type="similarity">
    <text evidence="1">In the C-terminal section; belongs to the transferase hexapeptide repeat family.</text>
</comment>
<reference key="1">
    <citation type="journal article" date="2006" name="Proc. Natl. Acad. Sci. U.S.A.">
        <title>Comparative genomics of the lactic acid bacteria.</title>
        <authorList>
            <person name="Makarova K.S."/>
            <person name="Slesarev A."/>
            <person name="Wolf Y.I."/>
            <person name="Sorokin A."/>
            <person name="Mirkin B."/>
            <person name="Koonin E.V."/>
            <person name="Pavlov A."/>
            <person name="Pavlova N."/>
            <person name="Karamychev V."/>
            <person name="Polouchine N."/>
            <person name="Shakhova V."/>
            <person name="Grigoriev I."/>
            <person name="Lou Y."/>
            <person name="Rohksar D."/>
            <person name="Lucas S."/>
            <person name="Huang K."/>
            <person name="Goodstein D.M."/>
            <person name="Hawkins T."/>
            <person name="Plengvidhya V."/>
            <person name="Welker D."/>
            <person name="Hughes J."/>
            <person name="Goh Y."/>
            <person name="Benson A."/>
            <person name="Baldwin K."/>
            <person name="Lee J.-H."/>
            <person name="Diaz-Muniz I."/>
            <person name="Dosti B."/>
            <person name="Smeianov V."/>
            <person name="Wechter W."/>
            <person name="Barabote R."/>
            <person name="Lorca G."/>
            <person name="Altermann E."/>
            <person name="Barrangou R."/>
            <person name="Ganesan B."/>
            <person name="Xie Y."/>
            <person name="Rawsthorne H."/>
            <person name="Tamir D."/>
            <person name="Parker C."/>
            <person name="Breidt F."/>
            <person name="Broadbent J.R."/>
            <person name="Hutkins R."/>
            <person name="O'Sullivan D."/>
            <person name="Steele J."/>
            <person name="Unlu G."/>
            <person name="Saier M.H. Jr."/>
            <person name="Klaenhammer T."/>
            <person name="Richardson P."/>
            <person name="Kozyavkin S."/>
            <person name="Weimer B.C."/>
            <person name="Mills D.A."/>
        </authorList>
    </citation>
    <scope>NUCLEOTIDE SEQUENCE [LARGE SCALE GENOMIC DNA]</scope>
    <source>
        <strain>ATCC 25745 / CCUG 21536 / LMG 10740 / 183-1w</strain>
    </source>
</reference>
<evidence type="ECO:0000255" key="1">
    <source>
        <dbReference type="HAMAP-Rule" id="MF_01631"/>
    </source>
</evidence>
<protein>
    <recommendedName>
        <fullName evidence="1">Bifunctional protein GlmU</fullName>
    </recommendedName>
    <domain>
        <recommendedName>
            <fullName evidence="1">UDP-N-acetylglucosamine pyrophosphorylase</fullName>
            <ecNumber evidence="1">2.7.7.23</ecNumber>
        </recommendedName>
        <alternativeName>
            <fullName evidence="1">N-acetylglucosamine-1-phosphate uridyltransferase</fullName>
        </alternativeName>
    </domain>
    <domain>
        <recommendedName>
            <fullName evidence="1">Glucosamine-1-phosphate N-acetyltransferase</fullName>
            <ecNumber evidence="1">2.3.1.157</ecNumber>
        </recommendedName>
    </domain>
</protein>
<accession>Q03HD2</accession>
<organism>
    <name type="scientific">Pediococcus pentosaceus (strain ATCC 25745 / CCUG 21536 / LMG 10740 / 183-1w)</name>
    <dbReference type="NCBI Taxonomy" id="278197"/>
    <lineage>
        <taxon>Bacteria</taxon>
        <taxon>Bacillati</taxon>
        <taxon>Bacillota</taxon>
        <taxon>Bacilli</taxon>
        <taxon>Lactobacillales</taxon>
        <taxon>Lactobacillaceae</taxon>
        <taxon>Pediococcus</taxon>
    </lineage>
</organism>
<proteinExistence type="inferred from homology"/>
<keyword id="KW-0012">Acyltransferase</keyword>
<keyword id="KW-0133">Cell shape</keyword>
<keyword id="KW-0961">Cell wall biogenesis/degradation</keyword>
<keyword id="KW-0963">Cytoplasm</keyword>
<keyword id="KW-0460">Magnesium</keyword>
<keyword id="KW-0479">Metal-binding</keyword>
<keyword id="KW-0511">Multifunctional enzyme</keyword>
<keyword id="KW-0548">Nucleotidyltransferase</keyword>
<keyword id="KW-0573">Peptidoglycan synthesis</keyword>
<keyword id="KW-0677">Repeat</keyword>
<keyword id="KW-0808">Transferase</keyword>
<gene>
    <name evidence="1" type="primary">glmU</name>
    <name type="ordered locus">PEPE_0293</name>
</gene>
<feature type="chain" id="PRO_1000056179" description="Bifunctional protein GlmU">
    <location>
        <begin position="1"/>
        <end position="467"/>
    </location>
</feature>
<feature type="region of interest" description="Pyrophosphorylase" evidence="1">
    <location>
        <begin position="1"/>
        <end position="229"/>
    </location>
</feature>
<feature type="region of interest" description="Linker" evidence="1">
    <location>
        <begin position="230"/>
        <end position="250"/>
    </location>
</feature>
<feature type="region of interest" description="N-acetyltransferase" evidence="1">
    <location>
        <begin position="251"/>
        <end position="467"/>
    </location>
</feature>
<feature type="active site" description="Proton acceptor" evidence="1">
    <location>
        <position position="362"/>
    </location>
</feature>
<feature type="binding site" evidence="1">
    <location>
        <begin position="8"/>
        <end position="11"/>
    </location>
    <ligand>
        <name>UDP-N-acetyl-alpha-D-glucosamine</name>
        <dbReference type="ChEBI" id="CHEBI:57705"/>
    </ligand>
</feature>
<feature type="binding site" evidence="1">
    <location>
        <position position="22"/>
    </location>
    <ligand>
        <name>UDP-N-acetyl-alpha-D-glucosamine</name>
        <dbReference type="ChEBI" id="CHEBI:57705"/>
    </ligand>
</feature>
<feature type="binding site" evidence="1">
    <location>
        <position position="72"/>
    </location>
    <ligand>
        <name>UDP-N-acetyl-alpha-D-glucosamine</name>
        <dbReference type="ChEBI" id="CHEBI:57705"/>
    </ligand>
</feature>
<feature type="binding site" evidence="1">
    <location>
        <begin position="77"/>
        <end position="78"/>
    </location>
    <ligand>
        <name>UDP-N-acetyl-alpha-D-glucosamine</name>
        <dbReference type="ChEBI" id="CHEBI:57705"/>
    </ligand>
</feature>
<feature type="binding site" evidence="1">
    <location>
        <begin position="100"/>
        <end position="102"/>
    </location>
    <ligand>
        <name>UDP-N-acetyl-alpha-D-glucosamine</name>
        <dbReference type="ChEBI" id="CHEBI:57705"/>
    </ligand>
</feature>
<feature type="binding site" evidence="1">
    <location>
        <position position="102"/>
    </location>
    <ligand>
        <name>Mg(2+)</name>
        <dbReference type="ChEBI" id="CHEBI:18420"/>
    </ligand>
</feature>
<feature type="binding site" evidence="1">
    <location>
        <position position="139"/>
    </location>
    <ligand>
        <name>UDP-N-acetyl-alpha-D-glucosamine</name>
        <dbReference type="ChEBI" id="CHEBI:57705"/>
    </ligand>
</feature>
<feature type="binding site" evidence="1">
    <location>
        <position position="154"/>
    </location>
    <ligand>
        <name>UDP-N-acetyl-alpha-D-glucosamine</name>
        <dbReference type="ChEBI" id="CHEBI:57705"/>
    </ligand>
</feature>
<feature type="binding site" evidence="1">
    <location>
        <position position="169"/>
    </location>
    <ligand>
        <name>UDP-N-acetyl-alpha-D-glucosamine</name>
        <dbReference type="ChEBI" id="CHEBI:57705"/>
    </ligand>
</feature>
<feature type="binding site" evidence="1">
    <location>
        <position position="227"/>
    </location>
    <ligand>
        <name>Mg(2+)</name>
        <dbReference type="ChEBI" id="CHEBI:18420"/>
    </ligand>
</feature>
<feature type="binding site" evidence="1">
    <location>
        <position position="227"/>
    </location>
    <ligand>
        <name>UDP-N-acetyl-alpha-D-glucosamine</name>
        <dbReference type="ChEBI" id="CHEBI:57705"/>
    </ligand>
</feature>
<feature type="binding site" evidence="1">
    <location>
        <position position="332"/>
    </location>
    <ligand>
        <name>UDP-N-acetyl-alpha-D-glucosamine</name>
        <dbReference type="ChEBI" id="CHEBI:57705"/>
    </ligand>
</feature>
<feature type="binding site" evidence="1">
    <location>
        <position position="350"/>
    </location>
    <ligand>
        <name>UDP-N-acetyl-alpha-D-glucosamine</name>
        <dbReference type="ChEBI" id="CHEBI:57705"/>
    </ligand>
</feature>
<feature type="binding site" evidence="1">
    <location>
        <position position="365"/>
    </location>
    <ligand>
        <name>UDP-N-acetyl-alpha-D-glucosamine</name>
        <dbReference type="ChEBI" id="CHEBI:57705"/>
    </ligand>
</feature>
<feature type="binding site" evidence="1">
    <location>
        <position position="376"/>
    </location>
    <ligand>
        <name>UDP-N-acetyl-alpha-D-glucosamine</name>
        <dbReference type="ChEBI" id="CHEBI:57705"/>
    </ligand>
</feature>
<feature type="binding site" evidence="1">
    <location>
        <begin position="385"/>
        <end position="386"/>
    </location>
    <ligand>
        <name>acetyl-CoA</name>
        <dbReference type="ChEBI" id="CHEBI:57288"/>
    </ligand>
</feature>
<feature type="binding site" evidence="1">
    <location>
        <position position="404"/>
    </location>
    <ligand>
        <name>acetyl-CoA</name>
        <dbReference type="ChEBI" id="CHEBI:57288"/>
    </ligand>
</feature>
<feature type="binding site" evidence="1">
    <location>
        <position position="422"/>
    </location>
    <ligand>
        <name>acetyl-CoA</name>
        <dbReference type="ChEBI" id="CHEBI:57288"/>
    </ligand>
</feature>
<feature type="binding site" evidence="1">
    <location>
        <position position="439"/>
    </location>
    <ligand>
        <name>acetyl-CoA</name>
        <dbReference type="ChEBI" id="CHEBI:57288"/>
    </ligand>
</feature>
<name>GLMU_PEDPA</name>